<keyword id="KW-0687">Ribonucleoprotein</keyword>
<keyword id="KW-0689">Ribosomal protein</keyword>
<keyword id="KW-0694">RNA-binding</keyword>
<keyword id="KW-0699">rRNA-binding</keyword>
<accession>Q03IH6</accession>
<protein>
    <recommendedName>
        <fullName evidence="1">Small ribosomal subunit protein uS11</fullName>
    </recommendedName>
    <alternativeName>
        <fullName evidence="2">30S ribosomal protein S11</fullName>
    </alternativeName>
</protein>
<name>RS11_STRTD</name>
<organism>
    <name type="scientific">Streptococcus thermophilus (strain ATCC BAA-491 / LMD-9)</name>
    <dbReference type="NCBI Taxonomy" id="322159"/>
    <lineage>
        <taxon>Bacteria</taxon>
        <taxon>Bacillati</taxon>
        <taxon>Bacillota</taxon>
        <taxon>Bacilli</taxon>
        <taxon>Lactobacillales</taxon>
        <taxon>Streptococcaceae</taxon>
        <taxon>Streptococcus</taxon>
    </lineage>
</organism>
<proteinExistence type="inferred from homology"/>
<dbReference type="EMBL" id="CP000419">
    <property type="protein sequence ID" value="ABJ66996.1"/>
    <property type="molecule type" value="Genomic_DNA"/>
</dbReference>
<dbReference type="RefSeq" id="WP_002887520.1">
    <property type="nucleotide sequence ID" value="NZ_CP086001.1"/>
</dbReference>
<dbReference type="SMR" id="Q03IH6"/>
<dbReference type="GeneID" id="66899637"/>
<dbReference type="KEGG" id="ste:STER_1882"/>
<dbReference type="HOGENOM" id="CLU_072439_5_0_9"/>
<dbReference type="GO" id="GO:1990904">
    <property type="term" value="C:ribonucleoprotein complex"/>
    <property type="evidence" value="ECO:0007669"/>
    <property type="project" value="UniProtKB-KW"/>
</dbReference>
<dbReference type="GO" id="GO:0005840">
    <property type="term" value="C:ribosome"/>
    <property type="evidence" value="ECO:0007669"/>
    <property type="project" value="UniProtKB-KW"/>
</dbReference>
<dbReference type="GO" id="GO:0019843">
    <property type="term" value="F:rRNA binding"/>
    <property type="evidence" value="ECO:0007669"/>
    <property type="project" value="UniProtKB-UniRule"/>
</dbReference>
<dbReference type="GO" id="GO:0003735">
    <property type="term" value="F:structural constituent of ribosome"/>
    <property type="evidence" value="ECO:0007669"/>
    <property type="project" value="InterPro"/>
</dbReference>
<dbReference type="GO" id="GO:0006412">
    <property type="term" value="P:translation"/>
    <property type="evidence" value="ECO:0007669"/>
    <property type="project" value="UniProtKB-UniRule"/>
</dbReference>
<dbReference type="FunFam" id="3.30.420.80:FF:000001">
    <property type="entry name" value="30S ribosomal protein S11"/>
    <property type="match status" value="1"/>
</dbReference>
<dbReference type="Gene3D" id="3.30.420.80">
    <property type="entry name" value="Ribosomal protein S11"/>
    <property type="match status" value="1"/>
</dbReference>
<dbReference type="HAMAP" id="MF_01310">
    <property type="entry name" value="Ribosomal_uS11"/>
    <property type="match status" value="1"/>
</dbReference>
<dbReference type="InterPro" id="IPR001971">
    <property type="entry name" value="Ribosomal_uS11"/>
</dbReference>
<dbReference type="InterPro" id="IPR019981">
    <property type="entry name" value="Ribosomal_uS11_bac-type"/>
</dbReference>
<dbReference type="InterPro" id="IPR018102">
    <property type="entry name" value="Ribosomal_uS11_CS"/>
</dbReference>
<dbReference type="InterPro" id="IPR036967">
    <property type="entry name" value="Ribosomal_uS11_sf"/>
</dbReference>
<dbReference type="NCBIfam" id="NF003698">
    <property type="entry name" value="PRK05309.1"/>
    <property type="match status" value="1"/>
</dbReference>
<dbReference type="NCBIfam" id="TIGR03632">
    <property type="entry name" value="uS11_bact"/>
    <property type="match status" value="1"/>
</dbReference>
<dbReference type="PANTHER" id="PTHR11759">
    <property type="entry name" value="40S RIBOSOMAL PROTEIN S14/30S RIBOSOMAL PROTEIN S11"/>
    <property type="match status" value="1"/>
</dbReference>
<dbReference type="Pfam" id="PF00411">
    <property type="entry name" value="Ribosomal_S11"/>
    <property type="match status" value="1"/>
</dbReference>
<dbReference type="PIRSF" id="PIRSF002131">
    <property type="entry name" value="Ribosomal_S11"/>
    <property type="match status" value="1"/>
</dbReference>
<dbReference type="SUPFAM" id="SSF53137">
    <property type="entry name" value="Translational machinery components"/>
    <property type="match status" value="1"/>
</dbReference>
<dbReference type="PROSITE" id="PS00054">
    <property type="entry name" value="RIBOSOMAL_S11"/>
    <property type="match status" value="1"/>
</dbReference>
<comment type="function">
    <text evidence="1">Located on the platform of the 30S subunit, it bridges several disparate RNA helices of the 16S rRNA. Forms part of the Shine-Dalgarno cleft in the 70S ribosome.</text>
</comment>
<comment type="subunit">
    <text evidence="1">Part of the 30S ribosomal subunit. Interacts with proteins S7 and S18. Binds to IF-3.</text>
</comment>
<comment type="similarity">
    <text evidence="1">Belongs to the universal ribosomal protein uS11 family.</text>
</comment>
<sequence length="127" mass="13385">MAKPTRKRRVKKNIESGIAHIHATFNNTIVMITDVHGNAVAWSSAGALGFKGSRKSTPFAAQMASEAAAKSAQEHGLKTVEVTVKGPGSGRESAIRALAAAGLEVTAIRDVTPVPHNGARPPKRRRV</sequence>
<feature type="chain" id="PRO_0000294872" description="Small ribosomal subunit protein uS11">
    <location>
        <begin position="1"/>
        <end position="127"/>
    </location>
</feature>
<evidence type="ECO:0000255" key="1">
    <source>
        <dbReference type="HAMAP-Rule" id="MF_01310"/>
    </source>
</evidence>
<evidence type="ECO:0000305" key="2"/>
<gene>
    <name evidence="1" type="primary">rpsK</name>
    <name type="ordered locus">STER_1882</name>
</gene>
<reference key="1">
    <citation type="journal article" date="2006" name="Proc. Natl. Acad. Sci. U.S.A.">
        <title>Comparative genomics of the lactic acid bacteria.</title>
        <authorList>
            <person name="Makarova K.S."/>
            <person name="Slesarev A."/>
            <person name="Wolf Y.I."/>
            <person name="Sorokin A."/>
            <person name="Mirkin B."/>
            <person name="Koonin E.V."/>
            <person name="Pavlov A."/>
            <person name="Pavlova N."/>
            <person name="Karamychev V."/>
            <person name="Polouchine N."/>
            <person name="Shakhova V."/>
            <person name="Grigoriev I."/>
            <person name="Lou Y."/>
            <person name="Rohksar D."/>
            <person name="Lucas S."/>
            <person name="Huang K."/>
            <person name="Goodstein D.M."/>
            <person name="Hawkins T."/>
            <person name="Plengvidhya V."/>
            <person name="Welker D."/>
            <person name="Hughes J."/>
            <person name="Goh Y."/>
            <person name="Benson A."/>
            <person name="Baldwin K."/>
            <person name="Lee J.-H."/>
            <person name="Diaz-Muniz I."/>
            <person name="Dosti B."/>
            <person name="Smeianov V."/>
            <person name="Wechter W."/>
            <person name="Barabote R."/>
            <person name="Lorca G."/>
            <person name="Altermann E."/>
            <person name="Barrangou R."/>
            <person name="Ganesan B."/>
            <person name="Xie Y."/>
            <person name="Rawsthorne H."/>
            <person name="Tamir D."/>
            <person name="Parker C."/>
            <person name="Breidt F."/>
            <person name="Broadbent J.R."/>
            <person name="Hutkins R."/>
            <person name="O'Sullivan D."/>
            <person name="Steele J."/>
            <person name="Unlu G."/>
            <person name="Saier M.H. Jr."/>
            <person name="Klaenhammer T."/>
            <person name="Richardson P."/>
            <person name="Kozyavkin S."/>
            <person name="Weimer B.C."/>
            <person name="Mills D.A."/>
        </authorList>
    </citation>
    <scope>NUCLEOTIDE SEQUENCE [LARGE SCALE GENOMIC DNA]</scope>
    <source>
        <strain>ATCC BAA-491 / LMD-9</strain>
    </source>
</reference>